<name>YIDC_SHIB3</name>
<gene>
    <name evidence="1" type="primary">yidC</name>
    <name type="ordered locus">SbBS512_E4220</name>
</gene>
<comment type="function">
    <text evidence="1">Required for the insertion and/or proper folding and/or complex formation of integral membrane proteins into the membrane. Involved in integration of membrane proteins that insert both dependently and independently of the Sec translocase complex, as well as at least some lipoproteins. Aids folding of multispanning membrane proteins.</text>
</comment>
<comment type="subunit">
    <text evidence="1">Interacts with the Sec translocase complex via SecD. Specifically interacts with transmembrane segments of nascent integral membrane proteins during membrane integration.</text>
</comment>
<comment type="subcellular location">
    <subcellularLocation>
        <location evidence="1">Cell inner membrane</location>
        <topology evidence="1">Multi-pass membrane protein</topology>
    </subcellularLocation>
</comment>
<comment type="similarity">
    <text evidence="1">Belongs to the OXA1/ALB3/YidC family. Type 1 subfamily.</text>
</comment>
<organism>
    <name type="scientific">Shigella boydii serotype 18 (strain CDC 3083-94 / BS512)</name>
    <dbReference type="NCBI Taxonomy" id="344609"/>
    <lineage>
        <taxon>Bacteria</taxon>
        <taxon>Pseudomonadati</taxon>
        <taxon>Pseudomonadota</taxon>
        <taxon>Gammaproteobacteria</taxon>
        <taxon>Enterobacterales</taxon>
        <taxon>Enterobacteriaceae</taxon>
        <taxon>Shigella</taxon>
    </lineage>
</organism>
<evidence type="ECO:0000255" key="1">
    <source>
        <dbReference type="HAMAP-Rule" id="MF_01810"/>
    </source>
</evidence>
<evidence type="ECO:0000256" key="2">
    <source>
        <dbReference type="SAM" id="MobiDB-lite"/>
    </source>
</evidence>
<keyword id="KW-0997">Cell inner membrane</keyword>
<keyword id="KW-1003">Cell membrane</keyword>
<keyword id="KW-0143">Chaperone</keyword>
<keyword id="KW-0472">Membrane</keyword>
<keyword id="KW-0653">Protein transport</keyword>
<keyword id="KW-1185">Reference proteome</keyword>
<keyword id="KW-0812">Transmembrane</keyword>
<keyword id="KW-1133">Transmembrane helix</keyword>
<keyword id="KW-0813">Transport</keyword>
<dbReference type="EMBL" id="CP001063">
    <property type="protein sequence ID" value="ACD06567.1"/>
    <property type="molecule type" value="Genomic_DNA"/>
</dbReference>
<dbReference type="RefSeq" id="WP_000378260.1">
    <property type="nucleotide sequence ID" value="NC_010658.1"/>
</dbReference>
<dbReference type="SMR" id="B2TUS3"/>
<dbReference type="STRING" id="344609.SbBS512_E4220"/>
<dbReference type="KEGG" id="sbc:SbBS512_E4220"/>
<dbReference type="HOGENOM" id="CLU_016535_3_0_6"/>
<dbReference type="Proteomes" id="UP000001030">
    <property type="component" value="Chromosome"/>
</dbReference>
<dbReference type="GO" id="GO:0005886">
    <property type="term" value="C:plasma membrane"/>
    <property type="evidence" value="ECO:0007669"/>
    <property type="project" value="UniProtKB-SubCell"/>
</dbReference>
<dbReference type="GO" id="GO:0032977">
    <property type="term" value="F:membrane insertase activity"/>
    <property type="evidence" value="ECO:0007669"/>
    <property type="project" value="InterPro"/>
</dbReference>
<dbReference type="GO" id="GO:0051205">
    <property type="term" value="P:protein insertion into membrane"/>
    <property type="evidence" value="ECO:0007669"/>
    <property type="project" value="TreeGrafter"/>
</dbReference>
<dbReference type="GO" id="GO:0015031">
    <property type="term" value="P:protein transport"/>
    <property type="evidence" value="ECO:0007669"/>
    <property type="project" value="UniProtKB-KW"/>
</dbReference>
<dbReference type="CDD" id="cd20070">
    <property type="entry name" value="5TM_YidC_Alb3"/>
    <property type="match status" value="1"/>
</dbReference>
<dbReference type="CDD" id="cd19961">
    <property type="entry name" value="EcYidC-like_peri"/>
    <property type="match status" value="1"/>
</dbReference>
<dbReference type="FunFam" id="2.70.98.90:FF:000001">
    <property type="entry name" value="Membrane protein insertase YidC"/>
    <property type="match status" value="1"/>
</dbReference>
<dbReference type="Gene3D" id="2.70.98.90">
    <property type="match status" value="1"/>
</dbReference>
<dbReference type="HAMAP" id="MF_01810">
    <property type="entry name" value="YidC_type1"/>
    <property type="match status" value="1"/>
</dbReference>
<dbReference type="InterPro" id="IPR019998">
    <property type="entry name" value="Membr_insert_YidC"/>
</dbReference>
<dbReference type="InterPro" id="IPR028053">
    <property type="entry name" value="Membr_insert_YidC_N"/>
</dbReference>
<dbReference type="InterPro" id="IPR001708">
    <property type="entry name" value="YidC/ALB3/OXA1/COX18"/>
</dbReference>
<dbReference type="InterPro" id="IPR028055">
    <property type="entry name" value="YidC/Oxa/ALB_C"/>
</dbReference>
<dbReference type="InterPro" id="IPR047196">
    <property type="entry name" value="YidC_ALB_C"/>
</dbReference>
<dbReference type="InterPro" id="IPR038221">
    <property type="entry name" value="YidC_periplasmic_sf"/>
</dbReference>
<dbReference type="NCBIfam" id="NF002351">
    <property type="entry name" value="PRK01318.1-1"/>
    <property type="match status" value="1"/>
</dbReference>
<dbReference type="NCBIfam" id="NF002352">
    <property type="entry name" value="PRK01318.1-3"/>
    <property type="match status" value="1"/>
</dbReference>
<dbReference type="NCBIfam" id="NF002353">
    <property type="entry name" value="PRK01318.1-4"/>
    <property type="match status" value="1"/>
</dbReference>
<dbReference type="NCBIfam" id="TIGR03593">
    <property type="entry name" value="yidC_nterm"/>
    <property type="match status" value="1"/>
</dbReference>
<dbReference type="NCBIfam" id="TIGR03592">
    <property type="entry name" value="yidC_oxa1_cterm"/>
    <property type="match status" value="1"/>
</dbReference>
<dbReference type="PANTHER" id="PTHR12428:SF65">
    <property type="entry name" value="CYTOCHROME C OXIDASE ASSEMBLY PROTEIN COX18, MITOCHONDRIAL"/>
    <property type="match status" value="1"/>
</dbReference>
<dbReference type="PANTHER" id="PTHR12428">
    <property type="entry name" value="OXA1"/>
    <property type="match status" value="1"/>
</dbReference>
<dbReference type="Pfam" id="PF02096">
    <property type="entry name" value="60KD_IMP"/>
    <property type="match status" value="1"/>
</dbReference>
<dbReference type="Pfam" id="PF14849">
    <property type="entry name" value="YidC_periplas"/>
    <property type="match status" value="1"/>
</dbReference>
<dbReference type="PRINTS" id="PR00701">
    <property type="entry name" value="60KDINNERMP"/>
</dbReference>
<dbReference type="PRINTS" id="PR01900">
    <property type="entry name" value="YIDCPROTEIN"/>
</dbReference>
<reference key="1">
    <citation type="submission" date="2008-05" db="EMBL/GenBank/DDBJ databases">
        <title>Complete sequence of Shigella boydii serotype 18 strain BS512.</title>
        <authorList>
            <person name="Rasko D.A."/>
            <person name="Rosovitz M."/>
            <person name="Maurelli A.T."/>
            <person name="Myers G."/>
            <person name="Seshadri R."/>
            <person name="Cer R."/>
            <person name="Jiang L."/>
            <person name="Ravel J."/>
            <person name="Sebastian Y."/>
        </authorList>
    </citation>
    <scope>NUCLEOTIDE SEQUENCE [LARGE SCALE GENOMIC DNA]</scope>
    <source>
        <strain>CDC 3083-94 / BS512</strain>
    </source>
</reference>
<sequence>MDSQRNLLVIALLFVSFMIWQAWEQDKNPQPQAQQTTQTTTTAAGSAADQGVPASGQGKLISVKTDVLDLTINTRGGDVEQALLPAYPKELNSTQPFQLLETSPQFIYQAQSGLTGRDGPDNPANGPRPLYNVEKDAYVLAEGQNELQVPMTYTDAAGNTFTKTFVLKRGDYAVNVNYNVQNAGEKPLEISTFGQLKQSITLPPHLDTGSSNFALHTFRGAAYSTPDEKYEKYKFDTIADNENLNISSKGGWVAMLQQYFATAWIPHNDGTNNFYTANLGNGIAAIGYKSQPVLVQPGQTGAMNSTLWVGPEIQDKMAAVAPHLDLTVDYGWLWFISQPLFKLLKWIHSFVGNWGFSIIIITFIVRGIMYPLTKTQYTSMAKMRMLQPKIQAMRERLGDDKQRISQEMMALYKAEKVNPLGGCFPLLIQMPIFLALYYMLMGSVELRQAPFALWIHDLSAQDPYYILPILMGVTMFFIQKMSPTTVTDPMQQKIMTFMPVIFTVFFLWFPSGLVLYYIVSNLVTIIQQQLIYRGLEKRGLHSREKKKS</sequence>
<feature type="chain" id="PRO_1000187708" description="Membrane protein insertase YidC">
    <location>
        <begin position="1"/>
        <end position="548"/>
    </location>
</feature>
<feature type="transmembrane region" description="Helical" evidence="1">
    <location>
        <begin position="6"/>
        <end position="26"/>
    </location>
</feature>
<feature type="transmembrane region" description="Helical" evidence="1">
    <location>
        <begin position="350"/>
        <end position="370"/>
    </location>
</feature>
<feature type="transmembrane region" description="Helical" evidence="1">
    <location>
        <begin position="420"/>
        <end position="440"/>
    </location>
</feature>
<feature type="transmembrane region" description="Helical" evidence="1">
    <location>
        <begin position="458"/>
        <end position="478"/>
    </location>
</feature>
<feature type="transmembrane region" description="Helical" evidence="1">
    <location>
        <begin position="499"/>
        <end position="519"/>
    </location>
</feature>
<feature type="region of interest" description="Disordered" evidence="2">
    <location>
        <begin position="28"/>
        <end position="55"/>
    </location>
</feature>
<feature type="compositionally biased region" description="Low complexity" evidence="2">
    <location>
        <begin position="30"/>
        <end position="50"/>
    </location>
</feature>
<accession>B2TUS3</accession>
<protein>
    <recommendedName>
        <fullName evidence="1">Membrane protein insertase YidC</fullName>
    </recommendedName>
    <alternativeName>
        <fullName evidence="1">Foldase YidC</fullName>
    </alternativeName>
    <alternativeName>
        <fullName evidence="1">Membrane integrase YidC</fullName>
    </alternativeName>
    <alternativeName>
        <fullName evidence="1">Membrane protein YidC</fullName>
    </alternativeName>
</protein>
<proteinExistence type="inferred from homology"/>